<gene>
    <name evidence="1" type="primary">dapD</name>
    <name type="ordered locus">Sfri_1267</name>
</gene>
<name>DAPD_SHEFN</name>
<reference key="1">
    <citation type="submission" date="2006-08" db="EMBL/GenBank/DDBJ databases">
        <title>Complete sequence of Shewanella frigidimarina NCIMB 400.</title>
        <authorList>
            <consortium name="US DOE Joint Genome Institute"/>
            <person name="Copeland A."/>
            <person name="Lucas S."/>
            <person name="Lapidus A."/>
            <person name="Barry K."/>
            <person name="Detter J.C."/>
            <person name="Glavina del Rio T."/>
            <person name="Hammon N."/>
            <person name="Israni S."/>
            <person name="Dalin E."/>
            <person name="Tice H."/>
            <person name="Pitluck S."/>
            <person name="Fredrickson J.K."/>
            <person name="Kolker E."/>
            <person name="McCuel L.A."/>
            <person name="DiChristina T."/>
            <person name="Nealson K.H."/>
            <person name="Newman D."/>
            <person name="Tiedje J.M."/>
            <person name="Zhou J."/>
            <person name="Romine M.F."/>
            <person name="Culley D.E."/>
            <person name="Serres M."/>
            <person name="Chertkov O."/>
            <person name="Brettin T."/>
            <person name="Bruce D."/>
            <person name="Han C."/>
            <person name="Tapia R."/>
            <person name="Gilna P."/>
            <person name="Schmutz J."/>
            <person name="Larimer F."/>
            <person name="Land M."/>
            <person name="Hauser L."/>
            <person name="Kyrpides N."/>
            <person name="Mikhailova N."/>
            <person name="Richardson P."/>
        </authorList>
    </citation>
    <scope>NUCLEOTIDE SEQUENCE [LARGE SCALE GENOMIC DNA]</scope>
    <source>
        <strain>NCIMB 400</strain>
    </source>
</reference>
<proteinExistence type="inferred from homology"/>
<comment type="catalytic activity">
    <reaction evidence="1">
        <text>(S)-2,3,4,5-tetrahydrodipicolinate + succinyl-CoA + H2O = (S)-2-succinylamino-6-oxoheptanedioate + CoA</text>
        <dbReference type="Rhea" id="RHEA:17325"/>
        <dbReference type="ChEBI" id="CHEBI:15377"/>
        <dbReference type="ChEBI" id="CHEBI:15685"/>
        <dbReference type="ChEBI" id="CHEBI:16845"/>
        <dbReference type="ChEBI" id="CHEBI:57287"/>
        <dbReference type="ChEBI" id="CHEBI:57292"/>
        <dbReference type="EC" id="2.3.1.117"/>
    </reaction>
</comment>
<comment type="pathway">
    <text evidence="1">Amino-acid biosynthesis; L-lysine biosynthesis via DAP pathway; LL-2,6-diaminopimelate from (S)-tetrahydrodipicolinate (succinylase route): step 1/3.</text>
</comment>
<comment type="subunit">
    <text evidence="1">Homotrimer.</text>
</comment>
<comment type="subcellular location">
    <subcellularLocation>
        <location evidence="1">Cytoplasm</location>
    </subcellularLocation>
</comment>
<comment type="similarity">
    <text evidence="1">Belongs to the transferase hexapeptide repeat family.</text>
</comment>
<sequence>MEALRQRIEAAFETRQDISPSSVEPSVRADVETVINMLDKGQARVAEKIDGEWHVHQWLKKAVLLSFRIFDNGVIEGGDTKYFDKVPQKFADYDEARFKAEGIRVVPPATVRKGSFIGKNTVLMPSYVNLGAYVDEGTMVDTWATVGSCAQIGKNVHLSGGVGIGGVLEPLQAGPTIIEDNCFIGARSEIVEGVVVEEGSVISMGVYIGQSTRIFDRETGEVHYGRVPAGSVVVSGNLPSACGTYSLYAAIIVKKVDAKTRGKVGINELLRIVD</sequence>
<protein>
    <recommendedName>
        <fullName evidence="1">2,3,4,5-tetrahydropyridine-2,6-dicarboxylate N-succinyltransferase</fullName>
        <ecNumber evidence="1">2.3.1.117</ecNumber>
    </recommendedName>
    <alternativeName>
        <fullName evidence="1">Tetrahydrodipicolinate N-succinyltransferase</fullName>
        <shortName evidence="1">THDP succinyltransferase</shortName>
        <shortName evidence="1">THP succinyltransferase</shortName>
        <shortName evidence="1">Tetrahydropicolinate succinylase</shortName>
    </alternativeName>
</protein>
<accession>Q085E5</accession>
<keyword id="KW-0012">Acyltransferase</keyword>
<keyword id="KW-0028">Amino-acid biosynthesis</keyword>
<keyword id="KW-0963">Cytoplasm</keyword>
<keyword id="KW-0220">Diaminopimelate biosynthesis</keyword>
<keyword id="KW-0457">Lysine biosynthesis</keyword>
<keyword id="KW-1185">Reference proteome</keyword>
<keyword id="KW-0677">Repeat</keyword>
<keyword id="KW-0808">Transferase</keyword>
<evidence type="ECO:0000255" key="1">
    <source>
        <dbReference type="HAMAP-Rule" id="MF_00811"/>
    </source>
</evidence>
<organism>
    <name type="scientific">Shewanella frigidimarina (strain NCIMB 400)</name>
    <dbReference type="NCBI Taxonomy" id="318167"/>
    <lineage>
        <taxon>Bacteria</taxon>
        <taxon>Pseudomonadati</taxon>
        <taxon>Pseudomonadota</taxon>
        <taxon>Gammaproteobacteria</taxon>
        <taxon>Alteromonadales</taxon>
        <taxon>Shewanellaceae</taxon>
        <taxon>Shewanella</taxon>
    </lineage>
</organism>
<feature type="chain" id="PRO_1000047184" description="2,3,4,5-tetrahydropyridine-2,6-dicarboxylate N-succinyltransferase">
    <location>
        <begin position="1"/>
        <end position="274"/>
    </location>
</feature>
<feature type="binding site" evidence="1">
    <location>
        <position position="104"/>
    </location>
    <ligand>
        <name>substrate</name>
    </ligand>
</feature>
<feature type="binding site" evidence="1">
    <location>
        <position position="141"/>
    </location>
    <ligand>
        <name>substrate</name>
    </ligand>
</feature>
<dbReference type="EC" id="2.3.1.117" evidence="1"/>
<dbReference type="EMBL" id="CP000447">
    <property type="protein sequence ID" value="ABI71120.1"/>
    <property type="molecule type" value="Genomic_DNA"/>
</dbReference>
<dbReference type="RefSeq" id="WP_011636741.1">
    <property type="nucleotide sequence ID" value="NC_008345.1"/>
</dbReference>
<dbReference type="SMR" id="Q085E5"/>
<dbReference type="STRING" id="318167.Sfri_1267"/>
<dbReference type="KEGG" id="sfr:Sfri_1267"/>
<dbReference type="eggNOG" id="COG2171">
    <property type="taxonomic scope" value="Bacteria"/>
</dbReference>
<dbReference type="HOGENOM" id="CLU_050859_0_1_6"/>
<dbReference type="OrthoDB" id="9775362at2"/>
<dbReference type="UniPathway" id="UPA00034">
    <property type="reaction ID" value="UER00019"/>
</dbReference>
<dbReference type="Proteomes" id="UP000000684">
    <property type="component" value="Chromosome"/>
</dbReference>
<dbReference type="GO" id="GO:0005737">
    <property type="term" value="C:cytoplasm"/>
    <property type="evidence" value="ECO:0007669"/>
    <property type="project" value="UniProtKB-SubCell"/>
</dbReference>
<dbReference type="GO" id="GO:0008666">
    <property type="term" value="F:2,3,4,5-tetrahydropyridine-2,6-dicarboxylate N-succinyltransferase activity"/>
    <property type="evidence" value="ECO:0007669"/>
    <property type="project" value="UniProtKB-UniRule"/>
</dbReference>
<dbReference type="GO" id="GO:0016779">
    <property type="term" value="F:nucleotidyltransferase activity"/>
    <property type="evidence" value="ECO:0007669"/>
    <property type="project" value="TreeGrafter"/>
</dbReference>
<dbReference type="GO" id="GO:0019877">
    <property type="term" value="P:diaminopimelate biosynthetic process"/>
    <property type="evidence" value="ECO:0007669"/>
    <property type="project" value="UniProtKB-UniRule"/>
</dbReference>
<dbReference type="GO" id="GO:0009089">
    <property type="term" value="P:lysine biosynthetic process via diaminopimelate"/>
    <property type="evidence" value="ECO:0007669"/>
    <property type="project" value="UniProtKB-UniRule"/>
</dbReference>
<dbReference type="CDD" id="cd03350">
    <property type="entry name" value="LbH_THP_succinylT"/>
    <property type="match status" value="1"/>
</dbReference>
<dbReference type="Gene3D" id="2.160.10.10">
    <property type="entry name" value="Hexapeptide repeat proteins"/>
    <property type="match status" value="1"/>
</dbReference>
<dbReference type="Gene3D" id="1.10.166.10">
    <property type="entry name" value="Tetrahydrodipicolinate-N-succinyltransferase, N-terminal domain"/>
    <property type="match status" value="1"/>
</dbReference>
<dbReference type="HAMAP" id="MF_00811">
    <property type="entry name" value="DapD"/>
    <property type="match status" value="1"/>
</dbReference>
<dbReference type="InterPro" id="IPR005664">
    <property type="entry name" value="DapD_Trfase_Hexpep_rpt_fam"/>
</dbReference>
<dbReference type="InterPro" id="IPR001451">
    <property type="entry name" value="Hexapep"/>
</dbReference>
<dbReference type="InterPro" id="IPR018357">
    <property type="entry name" value="Hexapep_transf_CS"/>
</dbReference>
<dbReference type="InterPro" id="IPR023180">
    <property type="entry name" value="THP_succinylTrfase_dom1"/>
</dbReference>
<dbReference type="InterPro" id="IPR037133">
    <property type="entry name" value="THP_succinylTrfase_N_sf"/>
</dbReference>
<dbReference type="InterPro" id="IPR011004">
    <property type="entry name" value="Trimer_LpxA-like_sf"/>
</dbReference>
<dbReference type="NCBIfam" id="TIGR00965">
    <property type="entry name" value="dapD"/>
    <property type="match status" value="1"/>
</dbReference>
<dbReference type="NCBIfam" id="NF008808">
    <property type="entry name" value="PRK11830.1"/>
    <property type="match status" value="1"/>
</dbReference>
<dbReference type="PANTHER" id="PTHR19136:SF52">
    <property type="entry name" value="2,3,4,5-TETRAHYDROPYRIDINE-2,6-DICARBOXYLATE N-SUCCINYLTRANSFERASE"/>
    <property type="match status" value="1"/>
</dbReference>
<dbReference type="PANTHER" id="PTHR19136">
    <property type="entry name" value="MOLYBDENUM COFACTOR GUANYLYLTRANSFERASE"/>
    <property type="match status" value="1"/>
</dbReference>
<dbReference type="Pfam" id="PF14602">
    <property type="entry name" value="Hexapep_2"/>
    <property type="match status" value="1"/>
</dbReference>
<dbReference type="Pfam" id="PF14805">
    <property type="entry name" value="THDPS_N_2"/>
    <property type="match status" value="1"/>
</dbReference>
<dbReference type="SUPFAM" id="SSF51161">
    <property type="entry name" value="Trimeric LpxA-like enzymes"/>
    <property type="match status" value="1"/>
</dbReference>
<dbReference type="PROSITE" id="PS00101">
    <property type="entry name" value="HEXAPEP_TRANSFERASES"/>
    <property type="match status" value="1"/>
</dbReference>